<organism>
    <name type="scientific">Streptococcus agalactiae serotype III (strain NEM316)</name>
    <dbReference type="NCBI Taxonomy" id="211110"/>
    <lineage>
        <taxon>Bacteria</taxon>
        <taxon>Bacillati</taxon>
        <taxon>Bacillota</taxon>
        <taxon>Bacilli</taxon>
        <taxon>Lactobacillales</taxon>
        <taxon>Streptococcaceae</taxon>
        <taxon>Streptococcus</taxon>
    </lineage>
</organism>
<proteinExistence type="inferred from homology"/>
<dbReference type="EMBL" id="AL766856">
    <property type="protein sequence ID" value="CAD47774.1"/>
    <property type="molecule type" value="Genomic_DNA"/>
</dbReference>
<dbReference type="RefSeq" id="WP_000264863.1">
    <property type="nucleotide sequence ID" value="NC_004368.1"/>
</dbReference>
<dbReference type="SMR" id="Q8E2K7"/>
<dbReference type="KEGG" id="san:recF"/>
<dbReference type="eggNOG" id="COG1195">
    <property type="taxonomic scope" value="Bacteria"/>
</dbReference>
<dbReference type="HOGENOM" id="CLU_040267_0_1_9"/>
<dbReference type="Proteomes" id="UP000000823">
    <property type="component" value="Chromosome"/>
</dbReference>
<dbReference type="GO" id="GO:0005737">
    <property type="term" value="C:cytoplasm"/>
    <property type="evidence" value="ECO:0007669"/>
    <property type="project" value="UniProtKB-SubCell"/>
</dbReference>
<dbReference type="GO" id="GO:0005524">
    <property type="term" value="F:ATP binding"/>
    <property type="evidence" value="ECO:0007669"/>
    <property type="project" value="UniProtKB-UniRule"/>
</dbReference>
<dbReference type="GO" id="GO:0003697">
    <property type="term" value="F:single-stranded DNA binding"/>
    <property type="evidence" value="ECO:0007669"/>
    <property type="project" value="UniProtKB-UniRule"/>
</dbReference>
<dbReference type="GO" id="GO:0006260">
    <property type="term" value="P:DNA replication"/>
    <property type="evidence" value="ECO:0007669"/>
    <property type="project" value="UniProtKB-UniRule"/>
</dbReference>
<dbReference type="GO" id="GO:0000731">
    <property type="term" value="P:DNA synthesis involved in DNA repair"/>
    <property type="evidence" value="ECO:0007669"/>
    <property type="project" value="TreeGrafter"/>
</dbReference>
<dbReference type="GO" id="GO:0006302">
    <property type="term" value="P:double-strand break repair"/>
    <property type="evidence" value="ECO:0007669"/>
    <property type="project" value="TreeGrafter"/>
</dbReference>
<dbReference type="GO" id="GO:0009432">
    <property type="term" value="P:SOS response"/>
    <property type="evidence" value="ECO:0007669"/>
    <property type="project" value="UniProtKB-UniRule"/>
</dbReference>
<dbReference type="CDD" id="cd03242">
    <property type="entry name" value="ABC_RecF"/>
    <property type="match status" value="1"/>
</dbReference>
<dbReference type="Gene3D" id="3.40.50.300">
    <property type="entry name" value="P-loop containing nucleotide triphosphate hydrolases"/>
    <property type="match status" value="1"/>
</dbReference>
<dbReference type="Gene3D" id="1.20.1050.90">
    <property type="entry name" value="RecF/RecN/SMC, N-terminal domain"/>
    <property type="match status" value="1"/>
</dbReference>
<dbReference type="HAMAP" id="MF_00365">
    <property type="entry name" value="RecF"/>
    <property type="match status" value="1"/>
</dbReference>
<dbReference type="InterPro" id="IPR001238">
    <property type="entry name" value="DNA-binding_RecF"/>
</dbReference>
<dbReference type="InterPro" id="IPR018078">
    <property type="entry name" value="DNA-binding_RecF_CS"/>
</dbReference>
<dbReference type="InterPro" id="IPR027417">
    <property type="entry name" value="P-loop_NTPase"/>
</dbReference>
<dbReference type="InterPro" id="IPR003395">
    <property type="entry name" value="RecF/RecN/SMC_N"/>
</dbReference>
<dbReference type="InterPro" id="IPR042174">
    <property type="entry name" value="RecF_2"/>
</dbReference>
<dbReference type="NCBIfam" id="TIGR00611">
    <property type="entry name" value="recf"/>
    <property type="match status" value="1"/>
</dbReference>
<dbReference type="PANTHER" id="PTHR32182">
    <property type="entry name" value="DNA REPLICATION AND REPAIR PROTEIN RECF"/>
    <property type="match status" value="1"/>
</dbReference>
<dbReference type="PANTHER" id="PTHR32182:SF0">
    <property type="entry name" value="DNA REPLICATION AND REPAIR PROTEIN RECF"/>
    <property type="match status" value="1"/>
</dbReference>
<dbReference type="Pfam" id="PF02463">
    <property type="entry name" value="SMC_N"/>
    <property type="match status" value="1"/>
</dbReference>
<dbReference type="SUPFAM" id="SSF52540">
    <property type="entry name" value="P-loop containing nucleoside triphosphate hydrolases"/>
    <property type="match status" value="1"/>
</dbReference>
<dbReference type="PROSITE" id="PS00617">
    <property type="entry name" value="RECF_1"/>
    <property type="match status" value="1"/>
</dbReference>
<dbReference type="PROSITE" id="PS00618">
    <property type="entry name" value="RECF_2"/>
    <property type="match status" value="1"/>
</dbReference>
<comment type="function">
    <text evidence="1">The RecF protein is involved in DNA metabolism; it is required for DNA replication and normal SOS inducibility. RecF binds preferentially to single-stranded, linear DNA. It also seems to bind ATP.</text>
</comment>
<comment type="subcellular location">
    <subcellularLocation>
        <location evidence="1">Cytoplasm</location>
    </subcellularLocation>
</comment>
<comment type="similarity">
    <text evidence="1">Belongs to the RecF family.</text>
</comment>
<gene>
    <name evidence="1" type="primary">recF</name>
    <name type="ordered locus">gbs2115</name>
</gene>
<sequence length="369" mass="42526">MWIKNISLKHYRNYEEAQVDFSPNLNIFIGRNAQGKTNFLEAIYFLALTRSHRTRSDKELVHFKHHDVQITGEVIRKSGHLNLDIQLSEKGRITKVNHLKQAKLSDYIGAMTVVLFAPEDLQLVKGAPSLRRKFLDIDIGQIKPTYLAELSNYNHVLKQRNTYLKTTNNVDKTFLTVLDEQLADYGSRVIEHRFDFIQALNDEADKHHYIISTELEHLSIHYKSSIEFTDKSSIREHFLNQLSKSHSRDIFKKNTSIGPHRDDITFFINDINATFASQGQQRSLILSLKLAEIELIKTVTNDYPILLLDDVMSELDNHRQLKLLEGIKENVQTFITTTSLEHLSALPDQLKIFNVSDGTISINEKKATD</sequence>
<protein>
    <recommendedName>
        <fullName evidence="1">DNA replication and repair protein RecF</fullName>
    </recommendedName>
</protein>
<keyword id="KW-0067">ATP-binding</keyword>
<keyword id="KW-0963">Cytoplasm</keyword>
<keyword id="KW-0227">DNA damage</keyword>
<keyword id="KW-0234">DNA repair</keyword>
<keyword id="KW-0235">DNA replication</keyword>
<keyword id="KW-0238">DNA-binding</keyword>
<keyword id="KW-0547">Nucleotide-binding</keyword>
<keyword id="KW-0742">SOS response</keyword>
<name>RECF_STRA3</name>
<accession>Q8E2K7</accession>
<evidence type="ECO:0000255" key="1">
    <source>
        <dbReference type="HAMAP-Rule" id="MF_00365"/>
    </source>
</evidence>
<reference key="1">
    <citation type="journal article" date="2002" name="Mol. Microbiol.">
        <title>Genome sequence of Streptococcus agalactiae, a pathogen causing invasive neonatal disease.</title>
        <authorList>
            <person name="Glaser P."/>
            <person name="Rusniok C."/>
            <person name="Buchrieser C."/>
            <person name="Chevalier F."/>
            <person name="Frangeul L."/>
            <person name="Msadek T."/>
            <person name="Zouine M."/>
            <person name="Couve E."/>
            <person name="Lalioui L."/>
            <person name="Poyart C."/>
            <person name="Trieu-Cuot P."/>
            <person name="Kunst F."/>
        </authorList>
    </citation>
    <scope>NUCLEOTIDE SEQUENCE [LARGE SCALE GENOMIC DNA]</scope>
    <source>
        <strain>NEM316</strain>
    </source>
</reference>
<feature type="chain" id="PRO_0000196467" description="DNA replication and repair protein RecF">
    <location>
        <begin position="1"/>
        <end position="369"/>
    </location>
</feature>
<feature type="binding site" evidence="1">
    <location>
        <begin position="30"/>
        <end position="37"/>
    </location>
    <ligand>
        <name>ATP</name>
        <dbReference type="ChEBI" id="CHEBI:30616"/>
    </ligand>
</feature>